<sequence>MSEATVNDNAAVKNEKGARKVRSGYVVSTKMNKTIVVELEDRKQHALYGKIMRRNSRVKVHDENETAGVGDRVRIEETRPLSKDKHFRLTEVIEKAR</sequence>
<reference key="1">
    <citation type="journal article" date="2005" name="J. Bacteriol.">
        <title>Complete genome sequence and analysis of the multiresistant nosocomial pathogen Corynebacterium jeikeium K411, a lipid-requiring bacterium of the human skin flora.</title>
        <authorList>
            <person name="Tauch A."/>
            <person name="Kaiser O."/>
            <person name="Hain T."/>
            <person name="Goesmann A."/>
            <person name="Weisshaar B."/>
            <person name="Albersmeier A."/>
            <person name="Bekel T."/>
            <person name="Bischoff N."/>
            <person name="Brune I."/>
            <person name="Chakraborty T."/>
            <person name="Kalinowski J."/>
            <person name="Meyer F."/>
            <person name="Rupp O."/>
            <person name="Schneiker S."/>
            <person name="Viehoever P."/>
            <person name="Puehler A."/>
        </authorList>
    </citation>
    <scope>NUCLEOTIDE SEQUENCE [LARGE SCALE GENOMIC DNA]</scope>
    <source>
        <strain>K411</strain>
    </source>
</reference>
<name>RS17_CORJK</name>
<feature type="chain" id="PRO_0000233466" description="Small ribosomal subunit protein uS17">
    <location>
        <begin position="1"/>
        <end position="97"/>
    </location>
</feature>
<feature type="region of interest" description="Disordered" evidence="2">
    <location>
        <begin position="1"/>
        <end position="20"/>
    </location>
</feature>
<keyword id="KW-1185">Reference proteome</keyword>
<keyword id="KW-0687">Ribonucleoprotein</keyword>
<keyword id="KW-0689">Ribosomal protein</keyword>
<keyword id="KW-0694">RNA-binding</keyword>
<keyword id="KW-0699">rRNA-binding</keyword>
<dbReference type="EMBL" id="CR931997">
    <property type="protein sequence ID" value="CAI38001.1"/>
    <property type="molecule type" value="Genomic_DNA"/>
</dbReference>
<dbReference type="RefSeq" id="WP_011274162.1">
    <property type="nucleotide sequence ID" value="NC_007164.1"/>
</dbReference>
<dbReference type="SMR" id="Q4JT56"/>
<dbReference type="STRING" id="306537.jk1824"/>
<dbReference type="KEGG" id="cjk:jk1824"/>
<dbReference type="PATRIC" id="fig|306537.10.peg.1847"/>
<dbReference type="eggNOG" id="COG0186">
    <property type="taxonomic scope" value="Bacteria"/>
</dbReference>
<dbReference type="HOGENOM" id="CLU_073626_1_0_11"/>
<dbReference type="OrthoDB" id="9811714at2"/>
<dbReference type="Proteomes" id="UP000000545">
    <property type="component" value="Chromosome"/>
</dbReference>
<dbReference type="GO" id="GO:0022627">
    <property type="term" value="C:cytosolic small ribosomal subunit"/>
    <property type="evidence" value="ECO:0007669"/>
    <property type="project" value="TreeGrafter"/>
</dbReference>
<dbReference type="GO" id="GO:0019843">
    <property type="term" value="F:rRNA binding"/>
    <property type="evidence" value="ECO:0007669"/>
    <property type="project" value="UniProtKB-UniRule"/>
</dbReference>
<dbReference type="GO" id="GO:0003735">
    <property type="term" value="F:structural constituent of ribosome"/>
    <property type="evidence" value="ECO:0007669"/>
    <property type="project" value="InterPro"/>
</dbReference>
<dbReference type="GO" id="GO:0006412">
    <property type="term" value="P:translation"/>
    <property type="evidence" value="ECO:0007669"/>
    <property type="project" value="UniProtKB-UniRule"/>
</dbReference>
<dbReference type="CDD" id="cd00364">
    <property type="entry name" value="Ribosomal_uS17"/>
    <property type="match status" value="1"/>
</dbReference>
<dbReference type="Gene3D" id="2.40.50.140">
    <property type="entry name" value="Nucleic acid-binding proteins"/>
    <property type="match status" value="1"/>
</dbReference>
<dbReference type="HAMAP" id="MF_01345_B">
    <property type="entry name" value="Ribosomal_uS17_B"/>
    <property type="match status" value="1"/>
</dbReference>
<dbReference type="InterPro" id="IPR012340">
    <property type="entry name" value="NA-bd_OB-fold"/>
</dbReference>
<dbReference type="InterPro" id="IPR000266">
    <property type="entry name" value="Ribosomal_uS17"/>
</dbReference>
<dbReference type="InterPro" id="IPR019984">
    <property type="entry name" value="Ribosomal_uS17_bact/chlr"/>
</dbReference>
<dbReference type="InterPro" id="IPR019979">
    <property type="entry name" value="Ribosomal_uS17_CS"/>
</dbReference>
<dbReference type="NCBIfam" id="NF004123">
    <property type="entry name" value="PRK05610.1"/>
    <property type="match status" value="1"/>
</dbReference>
<dbReference type="NCBIfam" id="TIGR03635">
    <property type="entry name" value="uS17_bact"/>
    <property type="match status" value="1"/>
</dbReference>
<dbReference type="PANTHER" id="PTHR10744">
    <property type="entry name" value="40S RIBOSOMAL PROTEIN S11 FAMILY MEMBER"/>
    <property type="match status" value="1"/>
</dbReference>
<dbReference type="PANTHER" id="PTHR10744:SF1">
    <property type="entry name" value="SMALL RIBOSOMAL SUBUNIT PROTEIN US17M"/>
    <property type="match status" value="1"/>
</dbReference>
<dbReference type="Pfam" id="PF00366">
    <property type="entry name" value="Ribosomal_S17"/>
    <property type="match status" value="1"/>
</dbReference>
<dbReference type="PRINTS" id="PR00973">
    <property type="entry name" value="RIBOSOMALS17"/>
</dbReference>
<dbReference type="SUPFAM" id="SSF50249">
    <property type="entry name" value="Nucleic acid-binding proteins"/>
    <property type="match status" value="1"/>
</dbReference>
<dbReference type="PROSITE" id="PS00056">
    <property type="entry name" value="RIBOSOMAL_S17"/>
    <property type="match status" value="1"/>
</dbReference>
<protein>
    <recommendedName>
        <fullName evidence="1">Small ribosomal subunit protein uS17</fullName>
    </recommendedName>
    <alternativeName>
        <fullName evidence="3">30S ribosomal protein S17</fullName>
    </alternativeName>
</protein>
<proteinExistence type="inferred from homology"/>
<accession>Q4JT56</accession>
<organism>
    <name type="scientific">Corynebacterium jeikeium (strain K411)</name>
    <dbReference type="NCBI Taxonomy" id="306537"/>
    <lineage>
        <taxon>Bacteria</taxon>
        <taxon>Bacillati</taxon>
        <taxon>Actinomycetota</taxon>
        <taxon>Actinomycetes</taxon>
        <taxon>Mycobacteriales</taxon>
        <taxon>Corynebacteriaceae</taxon>
        <taxon>Corynebacterium</taxon>
    </lineage>
</organism>
<evidence type="ECO:0000255" key="1">
    <source>
        <dbReference type="HAMAP-Rule" id="MF_01345"/>
    </source>
</evidence>
<evidence type="ECO:0000256" key="2">
    <source>
        <dbReference type="SAM" id="MobiDB-lite"/>
    </source>
</evidence>
<evidence type="ECO:0000305" key="3"/>
<comment type="function">
    <text evidence="1">One of the primary rRNA binding proteins, it binds specifically to the 5'-end of 16S ribosomal RNA.</text>
</comment>
<comment type="subunit">
    <text evidence="1">Part of the 30S ribosomal subunit.</text>
</comment>
<comment type="similarity">
    <text evidence="1">Belongs to the universal ribosomal protein uS17 family.</text>
</comment>
<gene>
    <name evidence="1" type="primary">rpsQ</name>
    <name type="ordered locus">jk1824</name>
</gene>